<protein>
    <recommendedName>
        <fullName evidence="1">5-methyltetrahydropteroyltriglutamate--homocysteine methyltransferase</fullName>
        <ecNumber evidence="1">2.1.1.14</ecNumber>
    </recommendedName>
    <alternativeName>
        <fullName evidence="1">Cobalamin-independent methionine synthase</fullName>
    </alternativeName>
    <alternativeName>
        <fullName evidence="1">Methionine synthase, vitamin-B12 independent isozyme</fullName>
    </alternativeName>
</protein>
<name>METE_STAAB</name>
<sequence>MTTIKTSNLGFPRLGRKREWKKAIESYWAKKISKEELDQTLTDLHKENLLLQKYYHLDSIPVGDFSLYDHILDTSLLFNIIPERFQGRTIDDDLLFDIARGNKDHVASALIKWFNTNYHYIVPEWDNVEPKVSRNVLLDRFKYAQSLNVNAHPVIVGPITFVKLSKGGHQTFEEKVKTLLPLYKEVFESLIDAGAEYIQVDEPILVTDDSESYENITREAYDYFEKASVAKKLVIQTYFERAHLKFLSSLPVGGLGLDFVHDNGYNLKQIEAGDFDKSKTLYAGIIDGRNVWASDIEAKKVLIDKLLAHTNELVIQPSSSLLHVPVSLDDETLDTSVGEGLSFATEKLDELDALRRLFNQNDNFKYDKLKARYERFQNQSFKNLDYDFESVRTSRQSPFAQRIEQQQKRLNLPDLPTTTIGSFPQSREVRKYRADWKNKRITDEAYETFLKNEIARWIKIQEDIGLDVLVHGEFERNDMVEFFGEKLQGFLVTKFGWVQSYGSRAVKPPIIYGDVKWTAPLTVDETVYAQSLTDKPVKGMLTGPVTILNWSFERVDLPRKVVQDQIALAINEEVLALEAAGIKVIQVDEPALREGLPLRSEYHEQYLKDAVLSFKLATSSVRDETQIHTHMCYSQFGQIIHAIHDLDADVISIETSRSHGDLIKDFEDINYDLGIGLGVYDIHSPRIPTKEEITTAINRSLQQIDRSLFWVNPDCGLKTRKEEEVKDALTVLVNAVKAKRQE</sequence>
<organism>
    <name type="scientific">Staphylococcus aureus (strain bovine RF122 / ET3-1)</name>
    <dbReference type="NCBI Taxonomy" id="273036"/>
    <lineage>
        <taxon>Bacteria</taxon>
        <taxon>Bacillati</taxon>
        <taxon>Bacillota</taxon>
        <taxon>Bacilli</taxon>
        <taxon>Bacillales</taxon>
        <taxon>Staphylococcaceae</taxon>
        <taxon>Staphylococcus</taxon>
    </lineage>
</organism>
<keyword id="KW-0028">Amino-acid biosynthesis</keyword>
<keyword id="KW-0479">Metal-binding</keyword>
<keyword id="KW-0486">Methionine biosynthesis</keyword>
<keyword id="KW-0489">Methyltransferase</keyword>
<keyword id="KW-0677">Repeat</keyword>
<keyword id="KW-0808">Transferase</keyword>
<keyword id="KW-0862">Zinc</keyword>
<gene>
    <name evidence="1" type="primary">metE</name>
    <name type="ordered locus">SAB0306c</name>
</gene>
<comment type="function">
    <text evidence="1">Catalyzes the transfer of a methyl group from 5-methyltetrahydrofolate to homocysteine resulting in methionine formation.</text>
</comment>
<comment type="catalytic activity">
    <reaction evidence="1">
        <text>5-methyltetrahydropteroyltri-L-glutamate + L-homocysteine = tetrahydropteroyltri-L-glutamate + L-methionine</text>
        <dbReference type="Rhea" id="RHEA:21196"/>
        <dbReference type="ChEBI" id="CHEBI:57844"/>
        <dbReference type="ChEBI" id="CHEBI:58140"/>
        <dbReference type="ChEBI" id="CHEBI:58199"/>
        <dbReference type="ChEBI" id="CHEBI:58207"/>
        <dbReference type="EC" id="2.1.1.14"/>
    </reaction>
</comment>
<comment type="cofactor">
    <cofactor evidence="1">
        <name>Zn(2+)</name>
        <dbReference type="ChEBI" id="CHEBI:29105"/>
    </cofactor>
    <text evidence="1">Binds 1 zinc ion per subunit.</text>
</comment>
<comment type="pathway">
    <text evidence="1">Amino-acid biosynthesis; L-methionine biosynthesis via de novo pathway; L-methionine from L-homocysteine (MetE route): step 1/1.</text>
</comment>
<comment type="similarity">
    <text evidence="1">Belongs to the vitamin-B12 independent methionine synthase family.</text>
</comment>
<reference key="1">
    <citation type="journal article" date="2007" name="PLoS ONE">
        <title>Molecular correlates of host specialization in Staphylococcus aureus.</title>
        <authorList>
            <person name="Herron-Olson L."/>
            <person name="Fitzgerald J.R."/>
            <person name="Musser J.M."/>
            <person name="Kapur V."/>
        </authorList>
    </citation>
    <scope>NUCLEOTIDE SEQUENCE [LARGE SCALE GENOMIC DNA]</scope>
    <source>
        <strain>bovine RF122 / ET3-1</strain>
    </source>
</reference>
<feature type="chain" id="PRO_1000017280" description="5-methyltetrahydropteroyltriglutamate--homocysteine methyltransferase">
    <location>
        <begin position="1"/>
        <end position="742"/>
    </location>
</feature>
<feature type="active site" description="Proton donor" evidence="1">
    <location>
        <position position="683"/>
    </location>
</feature>
<feature type="binding site" evidence="1">
    <location>
        <begin position="18"/>
        <end position="21"/>
    </location>
    <ligand>
        <name>5-methyltetrahydropteroyltri-L-glutamate</name>
        <dbReference type="ChEBI" id="CHEBI:58207"/>
    </ligand>
</feature>
<feature type="binding site" evidence="1">
    <location>
        <position position="112"/>
    </location>
    <ligand>
        <name>5-methyltetrahydropteroyltri-L-glutamate</name>
        <dbReference type="ChEBI" id="CHEBI:58207"/>
    </ligand>
</feature>
<feature type="binding site" evidence="1">
    <location>
        <begin position="420"/>
        <end position="422"/>
    </location>
    <ligand>
        <name>L-homocysteine</name>
        <dbReference type="ChEBI" id="CHEBI:58199"/>
    </ligand>
</feature>
<feature type="binding site" evidence="1">
    <location>
        <begin position="420"/>
        <end position="422"/>
    </location>
    <ligand>
        <name>L-methionine</name>
        <dbReference type="ChEBI" id="CHEBI:57844"/>
    </ligand>
</feature>
<feature type="binding site" evidence="1">
    <location>
        <position position="473"/>
    </location>
    <ligand>
        <name>L-homocysteine</name>
        <dbReference type="ChEBI" id="CHEBI:58199"/>
    </ligand>
</feature>
<feature type="binding site" evidence="1">
    <location>
        <position position="473"/>
    </location>
    <ligand>
        <name>L-methionine</name>
        <dbReference type="ChEBI" id="CHEBI:57844"/>
    </ligand>
</feature>
<feature type="binding site" evidence="1">
    <location>
        <position position="550"/>
    </location>
    <ligand>
        <name>5-methyltetrahydropteroyltri-L-glutamate</name>
        <dbReference type="ChEBI" id="CHEBI:58207"/>
    </ligand>
</feature>
<feature type="binding site" evidence="1">
    <location>
        <position position="588"/>
    </location>
    <ligand>
        <name>L-homocysteine</name>
        <dbReference type="ChEBI" id="CHEBI:58199"/>
    </ligand>
</feature>
<feature type="binding site" evidence="1">
    <location>
        <position position="588"/>
    </location>
    <ligand>
        <name>L-methionine</name>
        <dbReference type="ChEBI" id="CHEBI:57844"/>
    </ligand>
</feature>
<feature type="binding site" evidence="1">
    <location>
        <position position="594"/>
    </location>
    <ligand>
        <name>5-methyltetrahydropteroyltri-L-glutamate</name>
        <dbReference type="ChEBI" id="CHEBI:58207"/>
    </ligand>
</feature>
<feature type="binding site" evidence="1">
    <location>
        <position position="630"/>
    </location>
    <ligand>
        <name>Zn(2+)</name>
        <dbReference type="ChEBI" id="CHEBI:29105"/>
        <note>catalytic</note>
    </ligand>
</feature>
<feature type="binding site" evidence="1">
    <location>
        <position position="632"/>
    </location>
    <ligand>
        <name>Zn(2+)</name>
        <dbReference type="ChEBI" id="CHEBI:29105"/>
        <note>catalytic</note>
    </ligand>
</feature>
<feature type="binding site" evidence="1">
    <location>
        <position position="654"/>
    </location>
    <ligand>
        <name>Zn(2+)</name>
        <dbReference type="ChEBI" id="CHEBI:29105"/>
        <note>catalytic</note>
    </ligand>
</feature>
<feature type="binding site" evidence="1">
    <location>
        <position position="715"/>
    </location>
    <ligand>
        <name>Zn(2+)</name>
        <dbReference type="ChEBI" id="CHEBI:29105"/>
        <note>catalytic</note>
    </ligand>
</feature>
<proteinExistence type="inferred from homology"/>
<evidence type="ECO:0000255" key="1">
    <source>
        <dbReference type="HAMAP-Rule" id="MF_00172"/>
    </source>
</evidence>
<dbReference type="EC" id="2.1.1.14" evidence="1"/>
<dbReference type="EMBL" id="AJ938182">
    <property type="protein sequence ID" value="CAI79994.1"/>
    <property type="molecule type" value="Genomic_DNA"/>
</dbReference>
<dbReference type="RefSeq" id="WP_000207632.1">
    <property type="nucleotide sequence ID" value="NC_007622.1"/>
</dbReference>
<dbReference type="SMR" id="Q2YVH7"/>
<dbReference type="KEGG" id="sab:SAB0306c"/>
<dbReference type="HOGENOM" id="CLU_013175_0_0_9"/>
<dbReference type="UniPathway" id="UPA00051">
    <property type="reaction ID" value="UER00082"/>
</dbReference>
<dbReference type="GO" id="GO:0003871">
    <property type="term" value="F:5-methyltetrahydropteroyltriglutamate-homocysteine S-methyltransferase activity"/>
    <property type="evidence" value="ECO:0007669"/>
    <property type="project" value="UniProtKB-UniRule"/>
</dbReference>
<dbReference type="GO" id="GO:0008270">
    <property type="term" value="F:zinc ion binding"/>
    <property type="evidence" value="ECO:0007669"/>
    <property type="project" value="InterPro"/>
</dbReference>
<dbReference type="GO" id="GO:0009086">
    <property type="term" value="P:methionine biosynthetic process"/>
    <property type="evidence" value="ECO:0007669"/>
    <property type="project" value="UniProtKB-UniRule"/>
</dbReference>
<dbReference type="GO" id="GO:0032259">
    <property type="term" value="P:methylation"/>
    <property type="evidence" value="ECO:0007669"/>
    <property type="project" value="UniProtKB-KW"/>
</dbReference>
<dbReference type="CDD" id="cd03311">
    <property type="entry name" value="CIMS_C_terminal_like"/>
    <property type="match status" value="1"/>
</dbReference>
<dbReference type="CDD" id="cd03312">
    <property type="entry name" value="CIMS_N_terminal_like"/>
    <property type="match status" value="1"/>
</dbReference>
<dbReference type="Gene3D" id="3.20.20.210">
    <property type="match status" value="2"/>
</dbReference>
<dbReference type="HAMAP" id="MF_00172">
    <property type="entry name" value="Meth_synth"/>
    <property type="match status" value="1"/>
</dbReference>
<dbReference type="InterPro" id="IPR013215">
    <property type="entry name" value="Cbl-indep_Met_Synth_N"/>
</dbReference>
<dbReference type="InterPro" id="IPR006276">
    <property type="entry name" value="Cobalamin-indep_Met_synthase"/>
</dbReference>
<dbReference type="InterPro" id="IPR002629">
    <property type="entry name" value="Met_Synth_C/arc"/>
</dbReference>
<dbReference type="InterPro" id="IPR038071">
    <property type="entry name" value="UROD/MetE-like_sf"/>
</dbReference>
<dbReference type="NCBIfam" id="TIGR01371">
    <property type="entry name" value="met_syn_B12ind"/>
    <property type="match status" value="1"/>
</dbReference>
<dbReference type="NCBIfam" id="NF003556">
    <property type="entry name" value="PRK05222.1"/>
    <property type="match status" value="1"/>
</dbReference>
<dbReference type="PANTHER" id="PTHR30519">
    <property type="entry name" value="5-METHYLTETRAHYDROPTEROYLTRIGLUTAMATE--HOMOCYSTEINE METHYLTRANSFERASE"/>
    <property type="match status" value="1"/>
</dbReference>
<dbReference type="Pfam" id="PF08267">
    <property type="entry name" value="Meth_synt_1"/>
    <property type="match status" value="1"/>
</dbReference>
<dbReference type="Pfam" id="PF01717">
    <property type="entry name" value="Meth_synt_2"/>
    <property type="match status" value="1"/>
</dbReference>
<dbReference type="PIRSF" id="PIRSF000382">
    <property type="entry name" value="MeTrfase_B12_ind"/>
    <property type="match status" value="1"/>
</dbReference>
<dbReference type="SUPFAM" id="SSF51726">
    <property type="entry name" value="UROD/MetE-like"/>
    <property type="match status" value="2"/>
</dbReference>
<accession>Q2YVH7</accession>